<sequence length="391" mass="42751">MFGTALSSSATKVLLLGSGELGKEVAIECQRLGFEVIAVDRYLNAPAMQVAHRSYAIDMLDANALEEVINKEQPDFVVPEIEAIATDKLVELEKQGLNVVPTANATKLTMNREGIRRLAAEELQLPTSPYRFVDSYEELVEAVKFVGMPCVIKPVMSSSGKGQSVIKTEADIRTSWDYAQDGGRSGAGRVIVEGFVDFDYEISLLTVRAVDGVHFCAPIGHRQEDGDYRESWQPQVMTEAALKQAQNAAEKVVNALGGYGLFGVELFIKGDNIYFNEVSPRPHDTGLVTLISQEMSEFALHVRAFTGMPINQVTQYGPSASSVILGQGTSTNIRFDGLTEALSQPQTQIKLFGKPEIDGRRRLGVAITRRDNLETAIEDAVTASNKVQVIY</sequence>
<gene>
    <name evidence="1" type="primary">purT</name>
    <name type="ordered locus">VF_1487</name>
</gene>
<reference key="1">
    <citation type="journal article" date="2005" name="Proc. Natl. Acad. Sci. U.S.A.">
        <title>Complete genome sequence of Vibrio fischeri: a symbiotic bacterium with pathogenic congeners.</title>
        <authorList>
            <person name="Ruby E.G."/>
            <person name="Urbanowski M."/>
            <person name="Campbell J."/>
            <person name="Dunn A."/>
            <person name="Faini M."/>
            <person name="Gunsalus R."/>
            <person name="Lostroh P."/>
            <person name="Lupp C."/>
            <person name="McCann J."/>
            <person name="Millikan D."/>
            <person name="Schaefer A."/>
            <person name="Stabb E."/>
            <person name="Stevens A."/>
            <person name="Visick K."/>
            <person name="Whistler C."/>
            <person name="Greenberg E.P."/>
        </authorList>
    </citation>
    <scope>NUCLEOTIDE SEQUENCE [LARGE SCALE GENOMIC DNA]</scope>
    <source>
        <strain>ATCC 700601 / ES114</strain>
    </source>
</reference>
<dbReference type="EC" id="6.3.1.21" evidence="1"/>
<dbReference type="EMBL" id="CP000020">
    <property type="protein sequence ID" value="AAW85982.1"/>
    <property type="molecule type" value="Genomic_DNA"/>
</dbReference>
<dbReference type="RefSeq" id="WP_011262072.1">
    <property type="nucleotide sequence ID" value="NC_006840.2"/>
</dbReference>
<dbReference type="RefSeq" id="YP_204870.1">
    <property type="nucleotide sequence ID" value="NC_006840.2"/>
</dbReference>
<dbReference type="SMR" id="Q5E4R4"/>
<dbReference type="STRING" id="312309.VF_1487"/>
<dbReference type="EnsemblBacteria" id="AAW85982">
    <property type="protein sequence ID" value="AAW85982"/>
    <property type="gene ID" value="VF_1487"/>
</dbReference>
<dbReference type="GeneID" id="54164160"/>
<dbReference type="KEGG" id="vfi:VF_1487"/>
<dbReference type="PATRIC" id="fig|312309.11.peg.1504"/>
<dbReference type="eggNOG" id="COG0027">
    <property type="taxonomic scope" value="Bacteria"/>
</dbReference>
<dbReference type="HOGENOM" id="CLU_011534_1_3_6"/>
<dbReference type="OrthoDB" id="9804625at2"/>
<dbReference type="UniPathway" id="UPA00074">
    <property type="reaction ID" value="UER00127"/>
</dbReference>
<dbReference type="Proteomes" id="UP000000537">
    <property type="component" value="Chromosome I"/>
</dbReference>
<dbReference type="GO" id="GO:0005829">
    <property type="term" value="C:cytosol"/>
    <property type="evidence" value="ECO:0007669"/>
    <property type="project" value="TreeGrafter"/>
</dbReference>
<dbReference type="GO" id="GO:0005524">
    <property type="term" value="F:ATP binding"/>
    <property type="evidence" value="ECO:0007669"/>
    <property type="project" value="UniProtKB-UniRule"/>
</dbReference>
<dbReference type="GO" id="GO:0000287">
    <property type="term" value="F:magnesium ion binding"/>
    <property type="evidence" value="ECO:0007669"/>
    <property type="project" value="InterPro"/>
</dbReference>
<dbReference type="GO" id="GO:0043815">
    <property type="term" value="F:phosphoribosylglycinamide formyltransferase 2 activity"/>
    <property type="evidence" value="ECO:0007669"/>
    <property type="project" value="UniProtKB-UniRule"/>
</dbReference>
<dbReference type="GO" id="GO:0004644">
    <property type="term" value="F:phosphoribosylglycinamide formyltransferase activity"/>
    <property type="evidence" value="ECO:0007669"/>
    <property type="project" value="InterPro"/>
</dbReference>
<dbReference type="GO" id="GO:0006189">
    <property type="term" value="P:'de novo' IMP biosynthetic process"/>
    <property type="evidence" value="ECO:0007669"/>
    <property type="project" value="UniProtKB-UniRule"/>
</dbReference>
<dbReference type="FunFam" id="3.30.1490.20:FF:000013">
    <property type="entry name" value="Formate-dependent phosphoribosylglycinamide formyltransferase"/>
    <property type="match status" value="1"/>
</dbReference>
<dbReference type="FunFam" id="3.30.470.20:FF:000027">
    <property type="entry name" value="Formate-dependent phosphoribosylglycinamide formyltransferase"/>
    <property type="match status" value="1"/>
</dbReference>
<dbReference type="FunFam" id="3.40.50.20:FF:000007">
    <property type="entry name" value="Formate-dependent phosphoribosylglycinamide formyltransferase"/>
    <property type="match status" value="1"/>
</dbReference>
<dbReference type="Gene3D" id="3.40.50.20">
    <property type="match status" value="1"/>
</dbReference>
<dbReference type="Gene3D" id="3.30.1490.20">
    <property type="entry name" value="ATP-grasp fold, A domain"/>
    <property type="match status" value="1"/>
</dbReference>
<dbReference type="Gene3D" id="3.30.470.20">
    <property type="entry name" value="ATP-grasp fold, B domain"/>
    <property type="match status" value="1"/>
</dbReference>
<dbReference type="HAMAP" id="MF_01643">
    <property type="entry name" value="PurT"/>
    <property type="match status" value="1"/>
</dbReference>
<dbReference type="InterPro" id="IPR011761">
    <property type="entry name" value="ATP-grasp"/>
</dbReference>
<dbReference type="InterPro" id="IPR003135">
    <property type="entry name" value="ATP-grasp_carboxylate-amine"/>
</dbReference>
<dbReference type="InterPro" id="IPR013815">
    <property type="entry name" value="ATP_grasp_subdomain_1"/>
</dbReference>
<dbReference type="InterPro" id="IPR016185">
    <property type="entry name" value="PreATP-grasp_dom_sf"/>
</dbReference>
<dbReference type="InterPro" id="IPR005862">
    <property type="entry name" value="PurT"/>
</dbReference>
<dbReference type="InterPro" id="IPR054350">
    <property type="entry name" value="PurT/PurK_preATP-grasp"/>
</dbReference>
<dbReference type="InterPro" id="IPR048740">
    <property type="entry name" value="PurT_C"/>
</dbReference>
<dbReference type="InterPro" id="IPR011054">
    <property type="entry name" value="Rudment_hybrid_motif"/>
</dbReference>
<dbReference type="NCBIfam" id="NF006766">
    <property type="entry name" value="PRK09288.1"/>
    <property type="match status" value="1"/>
</dbReference>
<dbReference type="NCBIfam" id="TIGR01142">
    <property type="entry name" value="purT"/>
    <property type="match status" value="1"/>
</dbReference>
<dbReference type="PANTHER" id="PTHR43055">
    <property type="entry name" value="FORMATE-DEPENDENT PHOSPHORIBOSYLGLYCINAMIDE FORMYLTRANSFERASE"/>
    <property type="match status" value="1"/>
</dbReference>
<dbReference type="PANTHER" id="PTHR43055:SF1">
    <property type="entry name" value="FORMATE-DEPENDENT PHOSPHORIBOSYLGLYCINAMIDE FORMYLTRANSFERASE"/>
    <property type="match status" value="1"/>
</dbReference>
<dbReference type="Pfam" id="PF02222">
    <property type="entry name" value="ATP-grasp"/>
    <property type="match status" value="1"/>
</dbReference>
<dbReference type="Pfam" id="PF21244">
    <property type="entry name" value="PurT_C"/>
    <property type="match status" value="1"/>
</dbReference>
<dbReference type="Pfam" id="PF22660">
    <property type="entry name" value="RS_preATP-grasp-like"/>
    <property type="match status" value="1"/>
</dbReference>
<dbReference type="SUPFAM" id="SSF56059">
    <property type="entry name" value="Glutathione synthetase ATP-binding domain-like"/>
    <property type="match status" value="1"/>
</dbReference>
<dbReference type="SUPFAM" id="SSF52440">
    <property type="entry name" value="PreATP-grasp domain"/>
    <property type="match status" value="1"/>
</dbReference>
<dbReference type="SUPFAM" id="SSF51246">
    <property type="entry name" value="Rudiment single hybrid motif"/>
    <property type="match status" value="1"/>
</dbReference>
<dbReference type="PROSITE" id="PS50975">
    <property type="entry name" value="ATP_GRASP"/>
    <property type="match status" value="1"/>
</dbReference>
<feature type="chain" id="PRO_0000319257" description="Formate-dependent phosphoribosylglycinamide formyltransferase">
    <location>
        <begin position="1"/>
        <end position="391"/>
    </location>
</feature>
<feature type="domain" description="ATP-grasp" evidence="1">
    <location>
        <begin position="117"/>
        <end position="306"/>
    </location>
</feature>
<feature type="binding site" evidence="1">
    <location>
        <begin position="20"/>
        <end position="21"/>
    </location>
    <ligand>
        <name>N(1)-(5-phospho-beta-D-ribosyl)glycinamide</name>
        <dbReference type="ChEBI" id="CHEBI:143788"/>
    </ligand>
</feature>
<feature type="binding site" evidence="1">
    <location>
        <position position="80"/>
    </location>
    <ligand>
        <name>N(1)-(5-phospho-beta-D-ribosyl)glycinamide</name>
        <dbReference type="ChEBI" id="CHEBI:143788"/>
    </ligand>
</feature>
<feature type="binding site" evidence="1">
    <location>
        <position position="112"/>
    </location>
    <ligand>
        <name>ATP</name>
        <dbReference type="ChEBI" id="CHEBI:30616"/>
    </ligand>
</feature>
<feature type="binding site" evidence="1">
    <location>
        <position position="153"/>
    </location>
    <ligand>
        <name>ATP</name>
        <dbReference type="ChEBI" id="CHEBI:30616"/>
    </ligand>
</feature>
<feature type="binding site" evidence="1">
    <location>
        <begin position="158"/>
        <end position="163"/>
    </location>
    <ligand>
        <name>ATP</name>
        <dbReference type="ChEBI" id="CHEBI:30616"/>
    </ligand>
</feature>
<feature type="binding site" evidence="1">
    <location>
        <begin position="193"/>
        <end position="196"/>
    </location>
    <ligand>
        <name>ATP</name>
        <dbReference type="ChEBI" id="CHEBI:30616"/>
    </ligand>
</feature>
<feature type="binding site" evidence="1">
    <location>
        <position position="201"/>
    </location>
    <ligand>
        <name>ATP</name>
        <dbReference type="ChEBI" id="CHEBI:30616"/>
    </ligand>
</feature>
<feature type="binding site" evidence="1">
    <location>
        <position position="265"/>
    </location>
    <ligand>
        <name>Mg(2+)</name>
        <dbReference type="ChEBI" id="CHEBI:18420"/>
    </ligand>
</feature>
<feature type="binding site" evidence="1">
    <location>
        <position position="277"/>
    </location>
    <ligand>
        <name>Mg(2+)</name>
        <dbReference type="ChEBI" id="CHEBI:18420"/>
    </ligand>
</feature>
<feature type="binding site" evidence="1">
    <location>
        <position position="284"/>
    </location>
    <ligand>
        <name>N(1)-(5-phospho-beta-D-ribosyl)glycinamide</name>
        <dbReference type="ChEBI" id="CHEBI:143788"/>
    </ligand>
</feature>
<feature type="binding site" evidence="1">
    <location>
        <position position="354"/>
    </location>
    <ligand>
        <name>N(1)-(5-phospho-beta-D-ribosyl)glycinamide</name>
        <dbReference type="ChEBI" id="CHEBI:143788"/>
    </ligand>
</feature>
<feature type="binding site" evidence="1">
    <location>
        <begin position="361"/>
        <end position="362"/>
    </location>
    <ligand>
        <name>N(1)-(5-phospho-beta-D-ribosyl)glycinamide</name>
        <dbReference type="ChEBI" id="CHEBI:143788"/>
    </ligand>
</feature>
<comment type="function">
    <text evidence="1">Involved in the de novo purine biosynthesis. Catalyzes the transfer of formate to 5-phospho-ribosyl-glycinamide (GAR), producing 5-phospho-ribosyl-N-formylglycinamide (FGAR). Formate is provided by PurU via hydrolysis of 10-formyl-tetrahydrofolate.</text>
</comment>
<comment type="catalytic activity">
    <reaction evidence="1">
        <text>N(1)-(5-phospho-beta-D-ribosyl)glycinamide + formate + ATP = N(2)-formyl-N(1)-(5-phospho-beta-D-ribosyl)glycinamide + ADP + phosphate + H(+)</text>
        <dbReference type="Rhea" id="RHEA:24829"/>
        <dbReference type="ChEBI" id="CHEBI:15378"/>
        <dbReference type="ChEBI" id="CHEBI:15740"/>
        <dbReference type="ChEBI" id="CHEBI:30616"/>
        <dbReference type="ChEBI" id="CHEBI:43474"/>
        <dbReference type="ChEBI" id="CHEBI:143788"/>
        <dbReference type="ChEBI" id="CHEBI:147286"/>
        <dbReference type="ChEBI" id="CHEBI:456216"/>
        <dbReference type="EC" id="6.3.1.21"/>
    </reaction>
    <physiologicalReaction direction="left-to-right" evidence="1">
        <dbReference type="Rhea" id="RHEA:24830"/>
    </physiologicalReaction>
</comment>
<comment type="pathway">
    <text evidence="1">Purine metabolism; IMP biosynthesis via de novo pathway; N(2)-formyl-N(1)-(5-phospho-D-ribosyl)glycinamide from N(1)-(5-phospho-D-ribosyl)glycinamide (formate route): step 1/1.</text>
</comment>
<comment type="subunit">
    <text evidence="1">Homodimer.</text>
</comment>
<comment type="similarity">
    <text evidence="1">Belongs to the PurK/PurT family.</text>
</comment>
<name>PURT_ALIF1</name>
<protein>
    <recommendedName>
        <fullName evidence="1">Formate-dependent phosphoribosylglycinamide formyltransferase</fullName>
        <ecNumber evidence="1">6.3.1.21</ecNumber>
    </recommendedName>
    <alternativeName>
        <fullName evidence="1">5'-phosphoribosylglycinamide transformylase 2</fullName>
    </alternativeName>
    <alternativeName>
        <fullName evidence="1">Formate-dependent GAR transformylase</fullName>
    </alternativeName>
    <alternativeName>
        <fullName evidence="1">GAR transformylase 2</fullName>
        <shortName evidence="1">GART 2</shortName>
    </alternativeName>
    <alternativeName>
        <fullName evidence="1">Non-folate glycinamide ribonucleotide transformylase</fullName>
    </alternativeName>
    <alternativeName>
        <fullName evidence="1">Phosphoribosylglycinamide formyltransferase 2</fullName>
    </alternativeName>
</protein>
<organism>
    <name type="scientific">Aliivibrio fischeri (strain ATCC 700601 / ES114)</name>
    <name type="common">Vibrio fischeri</name>
    <dbReference type="NCBI Taxonomy" id="312309"/>
    <lineage>
        <taxon>Bacteria</taxon>
        <taxon>Pseudomonadati</taxon>
        <taxon>Pseudomonadota</taxon>
        <taxon>Gammaproteobacteria</taxon>
        <taxon>Vibrionales</taxon>
        <taxon>Vibrionaceae</taxon>
        <taxon>Aliivibrio</taxon>
    </lineage>
</organism>
<proteinExistence type="inferred from homology"/>
<evidence type="ECO:0000255" key="1">
    <source>
        <dbReference type="HAMAP-Rule" id="MF_01643"/>
    </source>
</evidence>
<accession>Q5E4R4</accession>
<keyword id="KW-0067">ATP-binding</keyword>
<keyword id="KW-0436">Ligase</keyword>
<keyword id="KW-0460">Magnesium</keyword>
<keyword id="KW-0479">Metal-binding</keyword>
<keyword id="KW-0547">Nucleotide-binding</keyword>
<keyword id="KW-0658">Purine biosynthesis</keyword>
<keyword id="KW-1185">Reference proteome</keyword>